<evidence type="ECO:0000250" key="1"/>
<evidence type="ECO:0000250" key="2">
    <source>
        <dbReference type="UniProtKB" id="P60842"/>
    </source>
</evidence>
<evidence type="ECO:0000250" key="3">
    <source>
        <dbReference type="UniProtKB" id="P60843"/>
    </source>
</evidence>
<evidence type="ECO:0000255" key="4">
    <source>
        <dbReference type="PROSITE-ProRule" id="PRU00541"/>
    </source>
</evidence>
<evidence type="ECO:0000255" key="5">
    <source>
        <dbReference type="PROSITE-ProRule" id="PRU00542"/>
    </source>
</evidence>
<evidence type="ECO:0000256" key="6">
    <source>
        <dbReference type="SAM" id="MobiDB-lite"/>
    </source>
</evidence>
<evidence type="ECO:0000305" key="7"/>
<comment type="function">
    <text evidence="1 2">ATP-dependent RNA helicase which is a subunit of the eIF4F complex involved in cap recognition and is required for mRNA binding to ribosome. In the current model of translation initiation, eIF4A unwinds RNA secondary structures in the 5'-UTR of mRNAs which is necessary to allow efficient binding of the small ribosomal subunit, and subsequent scanning for the initiator codon (By similarity). As a result, promotes cell proliferation and growth (By similarity).</text>
</comment>
<comment type="catalytic activity">
    <reaction>
        <text>ATP + H2O = ADP + phosphate + H(+)</text>
        <dbReference type="Rhea" id="RHEA:13065"/>
        <dbReference type="ChEBI" id="CHEBI:15377"/>
        <dbReference type="ChEBI" id="CHEBI:15378"/>
        <dbReference type="ChEBI" id="CHEBI:30616"/>
        <dbReference type="ChEBI" id="CHEBI:43474"/>
        <dbReference type="ChEBI" id="CHEBI:456216"/>
        <dbReference type="EC" id="3.6.4.13"/>
    </reaction>
</comment>
<comment type="subunit">
    <text evidence="1 2">eIF4F is a multi-subunit complex, the composition of which varies with external and internal environmental conditions. It is composed of at least EIF4A, EIF4E and EIF4G1/EIF4G3. Interacts with PAIP1, EIF4E and UPF2. Found in a complex with XPO7, EIF4A1, ARHGAP1, VPS26A, VPS29, VPS35 and SFN. May interact with NOM1. Interacts with PDCD4; this interferes with the interaction between EIF4A and EIF4G. Interacts with RBM4 (By similarity). Interacts with DDX3X in an RNA-independent manner (By similarity). Interacts with PKP1 (via N-terminus); the interaction promotes EIF4A1 recruitment to the cap-dependent translation complex and EIF4A1 ATPase activity (By similarity).</text>
</comment>
<comment type="subcellular location">
    <subcellularLocation>
        <location evidence="2">Cytoplasm</location>
        <location evidence="2">Perinuclear region</location>
    </subcellularLocation>
    <subcellularLocation>
        <location evidence="2">Cell membrane</location>
    </subcellularLocation>
    <subcellularLocation>
        <location evidence="2">Cytoplasm</location>
        <location evidence="2">Stress granule</location>
    </subcellularLocation>
    <text evidence="2">Colocalizes with PKP1 in stress granules following arsenate or hydrogen peroxide treatment.</text>
</comment>
<comment type="similarity">
    <text evidence="7">Belongs to the DEAD box helicase family. eIF4A subfamily.</text>
</comment>
<organism>
    <name type="scientific">Macaca fascicularis</name>
    <name type="common">Crab-eating macaque</name>
    <name type="synonym">Cynomolgus monkey</name>
    <dbReference type="NCBI Taxonomy" id="9541"/>
    <lineage>
        <taxon>Eukaryota</taxon>
        <taxon>Metazoa</taxon>
        <taxon>Chordata</taxon>
        <taxon>Craniata</taxon>
        <taxon>Vertebrata</taxon>
        <taxon>Euteleostomi</taxon>
        <taxon>Mammalia</taxon>
        <taxon>Eutheria</taxon>
        <taxon>Euarchontoglires</taxon>
        <taxon>Primates</taxon>
        <taxon>Haplorrhini</taxon>
        <taxon>Catarrhini</taxon>
        <taxon>Cercopithecidae</taxon>
        <taxon>Cercopithecinae</taxon>
        <taxon>Macaca</taxon>
    </lineage>
</organism>
<dbReference type="EC" id="3.6.4.13"/>
<dbReference type="EMBL" id="AB168447">
    <property type="protein sequence ID" value="BAE00567.1"/>
    <property type="molecule type" value="mRNA"/>
</dbReference>
<dbReference type="RefSeq" id="NP_001271946.1">
    <property type="nucleotide sequence ID" value="NM_001285017.1"/>
</dbReference>
<dbReference type="SMR" id="Q4R8K5"/>
<dbReference type="STRING" id="9541.ENSMFAP00000000666"/>
<dbReference type="eggNOG" id="KOG0327">
    <property type="taxonomic scope" value="Eukaryota"/>
</dbReference>
<dbReference type="Proteomes" id="UP000233100">
    <property type="component" value="Unplaced"/>
</dbReference>
<dbReference type="GO" id="GO:0010494">
    <property type="term" value="C:cytoplasmic stress granule"/>
    <property type="evidence" value="ECO:0007669"/>
    <property type="project" value="UniProtKB-SubCell"/>
</dbReference>
<dbReference type="GO" id="GO:0097165">
    <property type="term" value="C:nuclear stress granule"/>
    <property type="evidence" value="ECO:0000250"/>
    <property type="project" value="UniProtKB"/>
</dbReference>
<dbReference type="GO" id="GO:0048471">
    <property type="term" value="C:perinuclear region of cytoplasm"/>
    <property type="evidence" value="ECO:0000250"/>
    <property type="project" value="UniProtKB"/>
</dbReference>
<dbReference type="GO" id="GO:0005886">
    <property type="term" value="C:plasma membrane"/>
    <property type="evidence" value="ECO:0000250"/>
    <property type="project" value="UniProtKB"/>
</dbReference>
<dbReference type="GO" id="GO:0005524">
    <property type="term" value="F:ATP binding"/>
    <property type="evidence" value="ECO:0007669"/>
    <property type="project" value="UniProtKB-KW"/>
</dbReference>
<dbReference type="GO" id="GO:0016887">
    <property type="term" value="F:ATP hydrolysis activity"/>
    <property type="evidence" value="ECO:0007669"/>
    <property type="project" value="RHEA"/>
</dbReference>
<dbReference type="GO" id="GO:0003723">
    <property type="term" value="F:RNA binding"/>
    <property type="evidence" value="ECO:0007669"/>
    <property type="project" value="UniProtKB-KW"/>
</dbReference>
<dbReference type="GO" id="GO:0003724">
    <property type="term" value="F:RNA helicase activity"/>
    <property type="evidence" value="ECO:0007669"/>
    <property type="project" value="UniProtKB-EC"/>
</dbReference>
<dbReference type="GO" id="GO:0003743">
    <property type="term" value="F:translation initiation factor activity"/>
    <property type="evidence" value="ECO:0007669"/>
    <property type="project" value="UniProtKB-KW"/>
</dbReference>
<dbReference type="GO" id="GO:0045944">
    <property type="term" value="P:positive regulation of transcription by RNA polymerase II"/>
    <property type="evidence" value="ECO:0000250"/>
    <property type="project" value="UniProtKB"/>
</dbReference>
<dbReference type="CDD" id="cd18046">
    <property type="entry name" value="DEADc_EIF4AII_EIF4AI_DDX2"/>
    <property type="match status" value="1"/>
</dbReference>
<dbReference type="CDD" id="cd18787">
    <property type="entry name" value="SF2_C_DEAD"/>
    <property type="match status" value="1"/>
</dbReference>
<dbReference type="FunFam" id="3.40.50.300:FF:000089">
    <property type="entry name" value="Eukaryotic initiation factor 4A-II"/>
    <property type="match status" value="1"/>
</dbReference>
<dbReference type="FunFam" id="3.40.50.300:FF:000031">
    <property type="entry name" value="Eukaryotic initiation factor 4A-III"/>
    <property type="match status" value="1"/>
</dbReference>
<dbReference type="Gene3D" id="3.40.50.300">
    <property type="entry name" value="P-loop containing nucleotide triphosphate hydrolases"/>
    <property type="match status" value="2"/>
</dbReference>
<dbReference type="InterPro" id="IPR011545">
    <property type="entry name" value="DEAD/DEAH_box_helicase_dom"/>
</dbReference>
<dbReference type="InterPro" id="IPR044728">
    <property type="entry name" value="EIF4A_DEADc"/>
</dbReference>
<dbReference type="InterPro" id="IPR014001">
    <property type="entry name" value="Helicase_ATP-bd"/>
</dbReference>
<dbReference type="InterPro" id="IPR001650">
    <property type="entry name" value="Helicase_C-like"/>
</dbReference>
<dbReference type="InterPro" id="IPR027417">
    <property type="entry name" value="P-loop_NTPase"/>
</dbReference>
<dbReference type="InterPro" id="IPR000629">
    <property type="entry name" value="RNA-helicase_DEAD-box_CS"/>
</dbReference>
<dbReference type="InterPro" id="IPR014014">
    <property type="entry name" value="RNA_helicase_DEAD_Q_motif"/>
</dbReference>
<dbReference type="PANTHER" id="PTHR47958">
    <property type="entry name" value="ATP-DEPENDENT RNA HELICASE DBP3"/>
    <property type="match status" value="1"/>
</dbReference>
<dbReference type="Pfam" id="PF00270">
    <property type="entry name" value="DEAD"/>
    <property type="match status" value="1"/>
</dbReference>
<dbReference type="Pfam" id="PF00271">
    <property type="entry name" value="Helicase_C"/>
    <property type="match status" value="1"/>
</dbReference>
<dbReference type="SMART" id="SM00487">
    <property type="entry name" value="DEXDc"/>
    <property type="match status" value="1"/>
</dbReference>
<dbReference type="SMART" id="SM00490">
    <property type="entry name" value="HELICc"/>
    <property type="match status" value="1"/>
</dbReference>
<dbReference type="SUPFAM" id="SSF52540">
    <property type="entry name" value="P-loop containing nucleoside triphosphate hydrolases"/>
    <property type="match status" value="1"/>
</dbReference>
<dbReference type="PROSITE" id="PS00039">
    <property type="entry name" value="DEAD_ATP_HELICASE"/>
    <property type="match status" value="1"/>
</dbReference>
<dbReference type="PROSITE" id="PS51192">
    <property type="entry name" value="HELICASE_ATP_BIND_1"/>
    <property type="match status" value="1"/>
</dbReference>
<dbReference type="PROSITE" id="PS51194">
    <property type="entry name" value="HELICASE_CTER"/>
    <property type="match status" value="1"/>
</dbReference>
<dbReference type="PROSITE" id="PS51195">
    <property type="entry name" value="Q_MOTIF"/>
    <property type="match status" value="1"/>
</dbReference>
<gene>
    <name type="primary">EIF4A1</name>
    <name type="ORF">QtsA-12280</name>
</gene>
<accession>Q4R8K5</accession>
<sequence length="406" mass="46126">MSASQDSRSRDNGPDGMEPEGVIESNWNEIVDSFDDMNLSESLLRGIYAYGFEKPSAIQQRAILPCIKGYDVIAQAQSGTGKTATFAISILQQIELDLKATQALVLAPTRELAQQIQKVVMALGDYMGASCHACIGGTNVRAEVQKLQMEAPHIIVGTPGRVFDMLNRRYLSPKYIKMFVLDEADEMLSRGFKDQIYDIFQKLNSNTQVVLLSATMPSDVLEVTKKFMRDPIRILVKKEELTLEGIRQFYINVEREEWKLDTLCDLYETLTITQAVIFINTRRKVDWLTEKMHARDFTASAMHGDMDQKERDVIMREFRSGSSRVLITTDLLARGIDVQQVSLVINYDLPTNRENYIHRIGRGGRFGRKGVAINMVTEEDKRTLRDIETFYNTSIEEMPLNVADLI</sequence>
<reference key="1">
    <citation type="submission" date="2005-06" db="EMBL/GenBank/DDBJ databases">
        <title>DNA sequences of macaque genes expressed in brain or testis and its evolutionary implications.</title>
        <authorList>
            <consortium name="International consortium for macaque cDNA sequencing and analysis"/>
        </authorList>
    </citation>
    <scope>NUCLEOTIDE SEQUENCE [LARGE SCALE MRNA]</scope>
    <source>
        <tissue>Testis</tissue>
    </source>
</reference>
<keyword id="KW-0007">Acetylation</keyword>
<keyword id="KW-0067">ATP-binding</keyword>
<keyword id="KW-1003">Cell membrane</keyword>
<keyword id="KW-0963">Cytoplasm</keyword>
<keyword id="KW-0347">Helicase</keyword>
<keyword id="KW-0378">Hydrolase</keyword>
<keyword id="KW-0396">Initiation factor</keyword>
<keyword id="KW-1017">Isopeptide bond</keyword>
<keyword id="KW-0472">Membrane</keyword>
<keyword id="KW-0547">Nucleotide-binding</keyword>
<keyword id="KW-0597">Phosphoprotein</keyword>
<keyword id="KW-0648">Protein biosynthesis</keyword>
<keyword id="KW-1185">Reference proteome</keyword>
<keyword id="KW-0694">RNA-binding</keyword>
<keyword id="KW-0832">Ubl conjugation</keyword>
<name>IF4A1_MACFA</name>
<proteinExistence type="evidence at transcript level"/>
<protein>
    <recommendedName>
        <fullName>Eukaryotic initiation factor 4A-I</fullName>
        <shortName>eIF-4A-I</shortName>
        <shortName>eIF4A-I</shortName>
        <ecNumber>3.6.4.13</ecNumber>
    </recommendedName>
    <alternativeName>
        <fullName>ATP-dependent RNA helicase eIF4A-1</fullName>
    </alternativeName>
</protein>
<feature type="initiator methionine" description="Removed" evidence="2">
    <location>
        <position position="1"/>
    </location>
</feature>
<feature type="chain" id="PRO_0000054934" description="Eukaryotic initiation factor 4A-I">
    <location>
        <begin position="2"/>
        <end position="406"/>
    </location>
</feature>
<feature type="domain" description="Helicase ATP-binding" evidence="4">
    <location>
        <begin position="63"/>
        <end position="234"/>
    </location>
</feature>
<feature type="domain" description="Helicase C-terminal" evidence="5">
    <location>
        <begin position="245"/>
        <end position="406"/>
    </location>
</feature>
<feature type="region of interest" description="Disordered" evidence="6">
    <location>
        <begin position="1"/>
        <end position="21"/>
    </location>
</feature>
<feature type="short sequence motif" description="Q motif">
    <location>
        <begin position="32"/>
        <end position="60"/>
    </location>
</feature>
<feature type="short sequence motif" description="DEAD box">
    <location>
        <begin position="182"/>
        <end position="185"/>
    </location>
</feature>
<feature type="binding site" evidence="4">
    <location>
        <begin position="76"/>
        <end position="83"/>
    </location>
    <ligand>
        <name>ATP</name>
        <dbReference type="ChEBI" id="CHEBI:30616"/>
    </ligand>
</feature>
<feature type="modified residue" description="N-acetylserine" evidence="2">
    <location>
        <position position="2"/>
    </location>
</feature>
<feature type="modified residue" description="Phosphoserine" evidence="2">
    <location>
        <position position="4"/>
    </location>
</feature>
<feature type="modified residue" description="N6-acetyllysine" evidence="2">
    <location>
        <position position="118"/>
    </location>
</feature>
<feature type="modified residue" description="Phosphothreonine" evidence="2">
    <location>
        <position position="158"/>
    </location>
</feature>
<feature type="modified residue" description="N6-acetyllysine" evidence="2">
    <location>
        <position position="174"/>
    </location>
</feature>
<feature type="modified residue" description="N6-acetyllysine" evidence="3">
    <location>
        <position position="193"/>
    </location>
</feature>
<feature type="modified residue" description="N6-acetyllysine; alternate" evidence="3">
    <location>
        <position position="238"/>
    </location>
</feature>
<feature type="cross-link" description="Glycyl lysine isopeptide (Lys-Gly) (interchain with G-Cter in SUMO2)" evidence="2">
    <location>
        <position position="146"/>
    </location>
</feature>
<feature type="cross-link" description="Glycyl lysine isopeptide (Lys-Gly) (interchain with G-Cter in SUMO2)" evidence="2">
    <location>
        <position position="225"/>
    </location>
</feature>
<feature type="cross-link" description="Glycyl lysine isopeptide (Lys-Gly) (interchain with G-Cter in SUMO2); alternate" evidence="2">
    <location>
        <position position="238"/>
    </location>
</feature>
<feature type="cross-link" description="Glycyl lysine isopeptide (Lys-Gly) (interchain with G-Cter in SUMO2)" evidence="2">
    <location>
        <position position="309"/>
    </location>
</feature>
<feature type="cross-link" description="Glycyl lysine isopeptide (Lys-Gly) (interchain with G-Cter in SUMO2)" evidence="2">
    <location>
        <position position="369"/>
    </location>
</feature>
<feature type="cross-link" description="Glycyl lysine isopeptide (Lys-Gly) (interchain with G-Cter in SUMO2)" evidence="2">
    <location>
        <position position="381"/>
    </location>
</feature>